<accession>A7X6T9</accession>
<comment type="function">
    <text evidence="1">Is able to cleave peptidoglycan.</text>
</comment>
<comment type="subcellular location">
    <subcellularLocation>
        <location evidence="1">Secreted</location>
    </subcellularLocation>
</comment>
<comment type="similarity">
    <text evidence="2">Belongs to the transglycosylase family. IsaA subfamily.</text>
</comment>
<dbReference type="EC" id="3.2.-.-"/>
<dbReference type="EMBL" id="AP009324">
    <property type="protein sequence ID" value="BAF79436.1"/>
    <property type="molecule type" value="Genomic_DNA"/>
</dbReference>
<dbReference type="RefSeq" id="WP_000751263.1">
    <property type="nucleotide sequence ID" value="NC_009782.1"/>
</dbReference>
<dbReference type="SMR" id="A7X6T9"/>
<dbReference type="CAZy" id="GH23">
    <property type="family name" value="Glycoside Hydrolase Family 23"/>
</dbReference>
<dbReference type="KEGG" id="saw:SAHV_2553"/>
<dbReference type="HOGENOM" id="CLU_099865_0_0_9"/>
<dbReference type="GO" id="GO:0005576">
    <property type="term" value="C:extracellular region"/>
    <property type="evidence" value="ECO:0007669"/>
    <property type="project" value="UniProtKB-SubCell"/>
</dbReference>
<dbReference type="GO" id="GO:0016798">
    <property type="term" value="F:hydrolase activity, acting on glycosyl bonds"/>
    <property type="evidence" value="ECO:0007669"/>
    <property type="project" value="UniProtKB-KW"/>
</dbReference>
<dbReference type="Gene3D" id="1.10.530.10">
    <property type="match status" value="1"/>
</dbReference>
<dbReference type="InterPro" id="IPR023346">
    <property type="entry name" value="Lysozyme-like_dom_sf"/>
</dbReference>
<dbReference type="InterPro" id="IPR008258">
    <property type="entry name" value="Transglycosylase_SLT_dom_1"/>
</dbReference>
<dbReference type="Pfam" id="PF01464">
    <property type="entry name" value="SLT"/>
    <property type="match status" value="1"/>
</dbReference>
<dbReference type="SUPFAM" id="SSF53955">
    <property type="entry name" value="Lysozyme-like"/>
    <property type="match status" value="1"/>
</dbReference>
<proteinExistence type="inferred from homology"/>
<feature type="signal peptide" evidence="1">
    <location>
        <begin position="1"/>
        <end position="29"/>
    </location>
</feature>
<feature type="chain" id="PRO_0000329001" description="Probable transglycosylase IsaA">
    <location>
        <begin position="30"/>
        <end position="233"/>
    </location>
</feature>
<sequence>MKKTIMASSLAVALGVTGYAAGTGHQAHAAEVNVDQAHLVDLAHNHQDQLNAAPIKDGAYDIHFVKDGFQYNFTSNGTTWSWSYEAANGQTAGFSNVAGADYTTSYNQGSDVQSVSYNAQSSNSNVEAVSAPTYHNYSTSTTSSSVRLSNGNTAGATGSSAAQIMAQRTGVSASTWAAIIARESNGQVNAYNPSGASGLFQTMPGWGPTNTVDQQINAAVKAYKAQGLGAWGF</sequence>
<evidence type="ECO:0000250" key="1"/>
<evidence type="ECO:0000305" key="2"/>
<organism>
    <name type="scientific">Staphylococcus aureus (strain Mu3 / ATCC 700698)</name>
    <dbReference type="NCBI Taxonomy" id="418127"/>
    <lineage>
        <taxon>Bacteria</taxon>
        <taxon>Bacillati</taxon>
        <taxon>Bacillota</taxon>
        <taxon>Bacilli</taxon>
        <taxon>Bacillales</taxon>
        <taxon>Staphylococcaceae</taxon>
        <taxon>Staphylococcus</taxon>
    </lineage>
</organism>
<protein>
    <recommendedName>
        <fullName>Probable transglycosylase IsaA</fullName>
        <ecNumber>3.2.-.-</ecNumber>
    </recommendedName>
    <alternativeName>
        <fullName>Immunodominant staphylococcal antigen A</fullName>
    </alternativeName>
</protein>
<name>ISAA_STAA1</name>
<reference key="1">
    <citation type="journal article" date="2008" name="Antimicrob. Agents Chemother.">
        <title>Mutated response regulator graR is responsible for phenotypic conversion of Staphylococcus aureus from heterogeneous vancomycin-intermediate resistance to vancomycin-intermediate resistance.</title>
        <authorList>
            <person name="Neoh H.-M."/>
            <person name="Cui L."/>
            <person name="Yuzawa H."/>
            <person name="Takeuchi F."/>
            <person name="Matsuo M."/>
            <person name="Hiramatsu K."/>
        </authorList>
    </citation>
    <scope>NUCLEOTIDE SEQUENCE [LARGE SCALE GENOMIC DNA]</scope>
    <source>
        <strain>Mu3 / ATCC 700698</strain>
    </source>
</reference>
<keyword id="KW-0326">Glycosidase</keyword>
<keyword id="KW-0378">Hydrolase</keyword>
<keyword id="KW-0964">Secreted</keyword>
<keyword id="KW-0732">Signal</keyword>
<gene>
    <name type="primary">isaA</name>
    <name type="ordered locus">SAHV_2553</name>
</gene>